<gene>
    <name evidence="6" type="primary">sry1</name>
    <name evidence="6" type="ORF">SPCC320.14</name>
    <name evidence="6" type="ORF">SPCC330.15c</name>
</gene>
<comment type="function">
    <text evidence="3">Catalyzes the synthesis of D-serine from L-serine. Has dehydratase activity towards both L-serine and D-serine.</text>
</comment>
<comment type="catalytic activity">
    <reaction evidence="3">
        <text>L-serine = D-serine</text>
        <dbReference type="Rhea" id="RHEA:10980"/>
        <dbReference type="ChEBI" id="CHEBI:33384"/>
        <dbReference type="ChEBI" id="CHEBI:35247"/>
        <dbReference type="EC" id="5.1.1.18"/>
    </reaction>
</comment>
<comment type="catalytic activity">
    <reaction evidence="3">
        <text>L-serine = pyruvate + NH4(+)</text>
        <dbReference type="Rhea" id="RHEA:19169"/>
        <dbReference type="ChEBI" id="CHEBI:15361"/>
        <dbReference type="ChEBI" id="CHEBI:28938"/>
        <dbReference type="ChEBI" id="CHEBI:33384"/>
        <dbReference type="EC" id="4.3.1.17"/>
    </reaction>
</comment>
<comment type="catalytic activity">
    <reaction evidence="3">
        <text>D-serine = pyruvate + NH4(+)</text>
        <dbReference type="Rhea" id="RHEA:13977"/>
        <dbReference type="ChEBI" id="CHEBI:15361"/>
        <dbReference type="ChEBI" id="CHEBI:28938"/>
        <dbReference type="ChEBI" id="CHEBI:35247"/>
        <dbReference type="EC" id="4.3.1.18"/>
    </reaction>
</comment>
<comment type="cofactor">
    <cofactor evidence="2 3 4">
        <name>Mg(2+)</name>
        <dbReference type="ChEBI" id="CHEBI:18420"/>
    </cofactor>
    <cofactor evidence="1">
        <name>Mn(2+)</name>
        <dbReference type="ChEBI" id="CHEBI:29035"/>
    </cofactor>
    <cofactor evidence="1">
        <name>Ca(2+)</name>
        <dbReference type="ChEBI" id="CHEBI:29108"/>
    </cofactor>
</comment>
<comment type="cofactor">
    <cofactor evidence="2 3 4">
        <name>pyridoxal 5'-phosphate</name>
        <dbReference type="ChEBI" id="CHEBI:597326"/>
    </cofactor>
</comment>
<comment type="activity regulation">
    <text evidence="2 3">Allosterically activated by ATP, by magnesium, and possibly also by other divalent metal cations.</text>
</comment>
<comment type="biophysicochemical properties">
    <kinetics>
        <KM evidence="3">36 mM for serine</KM>
        <Vmax evidence="3">870.0 nmol/min/mg enzyme</Vmax>
    </kinetics>
</comment>
<comment type="subunit">
    <text evidence="2 3">Homodimer.</text>
</comment>
<comment type="PTM">
    <text>Modification of the active site Lys by its substrate Ser to lysino-D-alanine reduces but does not abolish enzyme activity.</text>
</comment>
<comment type="similarity">
    <text evidence="5">Belongs to the serine/threonine dehydratase family.</text>
</comment>
<evidence type="ECO:0000250" key="1">
    <source>
        <dbReference type="UniProtKB" id="Q9GZT4"/>
    </source>
</evidence>
<evidence type="ECO:0000269" key="2">
    <source>
    </source>
</evidence>
<evidence type="ECO:0000269" key="3">
    <source>
    </source>
</evidence>
<evidence type="ECO:0000269" key="4">
    <source ref="2"/>
</evidence>
<evidence type="ECO:0000305" key="5"/>
<evidence type="ECO:0000312" key="6">
    <source>
        <dbReference type="PomBase" id="SPCC320.14"/>
    </source>
</evidence>
<evidence type="ECO:0007744" key="7">
    <source>
        <dbReference type="PDB" id="1V71"/>
    </source>
</evidence>
<evidence type="ECO:0007744" key="8">
    <source>
        <dbReference type="PDB" id="1WTC"/>
    </source>
</evidence>
<evidence type="ECO:0007744" key="9">
    <source>
        <dbReference type="PDB" id="2ZPU"/>
    </source>
</evidence>
<evidence type="ECO:0007744" key="10">
    <source>
        <dbReference type="PDB" id="2ZR8"/>
    </source>
</evidence>
<evidence type="ECO:0007829" key="11">
    <source>
        <dbReference type="PDB" id="1V71"/>
    </source>
</evidence>
<evidence type="ECO:0007829" key="12">
    <source>
        <dbReference type="PDB" id="1WTC"/>
    </source>
</evidence>
<accession>O59791</accession>
<organism>
    <name type="scientific">Schizosaccharomyces pombe (strain 972 / ATCC 24843)</name>
    <name type="common">Fission yeast</name>
    <dbReference type="NCBI Taxonomy" id="284812"/>
    <lineage>
        <taxon>Eukaryota</taxon>
        <taxon>Fungi</taxon>
        <taxon>Dikarya</taxon>
        <taxon>Ascomycota</taxon>
        <taxon>Taphrinomycotina</taxon>
        <taxon>Schizosaccharomycetes</taxon>
        <taxon>Schizosaccharomycetales</taxon>
        <taxon>Schizosaccharomycetaceae</taxon>
        <taxon>Schizosaccharomyces</taxon>
    </lineage>
</organism>
<feature type="chain" id="PRO_0000185588" description="Serine racemase">
    <location>
        <begin position="1"/>
        <end position="323"/>
    </location>
</feature>
<feature type="active site" description="Proton acceptor" evidence="3 10">
    <location>
        <position position="57"/>
    </location>
</feature>
<feature type="active site" description="Proton acceptor" evidence="3 10">
    <location>
        <position position="82"/>
    </location>
</feature>
<feature type="binding site" evidence="1">
    <location>
        <position position="32"/>
    </location>
    <ligand>
        <name>ATP</name>
        <dbReference type="ChEBI" id="CHEBI:30616"/>
    </ligand>
</feature>
<feature type="binding site" evidence="1">
    <location>
        <position position="33"/>
    </location>
    <ligand>
        <name>ATP</name>
        <dbReference type="ChEBI" id="CHEBI:30616"/>
    </ligand>
</feature>
<feature type="binding site" evidence="1">
    <location>
        <position position="52"/>
    </location>
    <ligand>
        <name>ATP</name>
        <dbReference type="ChEBI" id="CHEBI:30616"/>
    </ligand>
</feature>
<feature type="binding site" evidence="1">
    <location>
        <position position="79"/>
    </location>
    <ligand>
        <name>Ca(2+)</name>
        <dbReference type="ChEBI" id="CHEBI:29108"/>
        <label>1</label>
    </ligand>
</feature>
<feature type="binding site" evidence="3 4 7 8">
    <location>
        <position position="84"/>
    </location>
    <ligand>
        <name>pyridoxal 5'-phosphate</name>
        <dbReference type="ChEBI" id="CHEBI:597326"/>
    </ligand>
</feature>
<feature type="binding site" evidence="1">
    <location>
        <position position="87"/>
    </location>
    <ligand>
        <name>ATP</name>
        <dbReference type="ChEBI" id="CHEBI:30616"/>
    </ligand>
</feature>
<feature type="binding site" evidence="1">
    <location>
        <position position="119"/>
    </location>
    <ligand>
        <name>ATP</name>
        <dbReference type="ChEBI" id="CHEBI:30616"/>
    </ligand>
</feature>
<feature type="binding site" evidence="1">
    <location>
        <position position="176"/>
    </location>
    <ligand>
        <name>Mg(2+)</name>
        <dbReference type="ChEBI" id="CHEBI:18420"/>
        <label>1</label>
    </ligand>
</feature>
<feature type="binding site" evidence="3 4 7 8">
    <location>
        <position position="183"/>
    </location>
    <ligand>
        <name>pyridoxal 5'-phosphate</name>
        <dbReference type="ChEBI" id="CHEBI:597326"/>
    </ligand>
</feature>
<feature type="binding site" evidence="3 4 7 8">
    <location>
        <position position="184"/>
    </location>
    <ligand>
        <name>pyridoxal 5'-phosphate</name>
        <dbReference type="ChEBI" id="CHEBI:597326"/>
    </ligand>
</feature>
<feature type="binding site" evidence="3 4 7 8">
    <location>
        <position position="185"/>
    </location>
    <ligand>
        <name>pyridoxal 5'-phosphate</name>
        <dbReference type="ChEBI" id="CHEBI:597326"/>
    </ligand>
</feature>
<feature type="binding site" evidence="3 4 7 8">
    <location>
        <position position="186"/>
    </location>
    <ligand>
        <name>pyridoxal 5'-phosphate</name>
        <dbReference type="ChEBI" id="CHEBI:597326"/>
    </ligand>
</feature>
<feature type="binding site" evidence="3 4 7 8">
    <location>
        <position position="187"/>
    </location>
    <ligand>
        <name>pyridoxal 5'-phosphate</name>
        <dbReference type="ChEBI" id="CHEBI:597326"/>
    </ligand>
</feature>
<feature type="binding site" evidence="1">
    <location>
        <position position="208"/>
    </location>
    <ligand>
        <name>Ca(2+)</name>
        <dbReference type="ChEBI" id="CHEBI:29108"/>
        <label>2</label>
    </ligand>
</feature>
<feature type="binding site" evidence="2 3 4 7 8 9 10">
    <location>
        <position position="208"/>
    </location>
    <ligand>
        <name>Mg(2+)</name>
        <dbReference type="ChEBI" id="CHEBI:18420"/>
        <label>2</label>
    </ligand>
</feature>
<feature type="binding site" evidence="1">
    <location>
        <position position="208"/>
    </location>
    <ligand>
        <name>Mn(2+)</name>
        <dbReference type="ChEBI" id="CHEBI:29035"/>
    </ligand>
</feature>
<feature type="binding site" evidence="1">
    <location>
        <position position="212"/>
    </location>
    <ligand>
        <name>Ca(2+)</name>
        <dbReference type="ChEBI" id="CHEBI:29108"/>
        <label>2</label>
    </ligand>
</feature>
<feature type="binding site" evidence="2 3 4 7 8 9 10">
    <location>
        <position position="212"/>
    </location>
    <ligand>
        <name>Mg(2+)</name>
        <dbReference type="ChEBI" id="CHEBI:18420"/>
        <label>2</label>
    </ligand>
</feature>
<feature type="binding site" evidence="1">
    <location>
        <position position="212"/>
    </location>
    <ligand>
        <name>Mn(2+)</name>
        <dbReference type="ChEBI" id="CHEBI:29035"/>
    </ligand>
</feature>
<feature type="binding site" evidence="1">
    <location>
        <position position="214"/>
    </location>
    <ligand>
        <name>Ca(2+)</name>
        <dbReference type="ChEBI" id="CHEBI:29108"/>
        <label>2</label>
    </ligand>
</feature>
<feature type="binding site" evidence="2 3 4 7 8 9 10">
    <location>
        <position position="214"/>
    </location>
    <ligand>
        <name>Mg(2+)</name>
        <dbReference type="ChEBI" id="CHEBI:18420"/>
        <label>2</label>
    </ligand>
</feature>
<feature type="binding site" evidence="1">
    <location>
        <position position="214"/>
    </location>
    <ligand>
        <name>Mn(2+)</name>
        <dbReference type="ChEBI" id="CHEBI:29035"/>
    </ligand>
</feature>
<feature type="binding site" evidence="1">
    <location>
        <position position="277"/>
    </location>
    <ligand>
        <name>ATP</name>
        <dbReference type="ChEBI" id="CHEBI:30616"/>
    </ligand>
</feature>
<feature type="binding site" evidence="3 4 7 8">
    <location>
        <position position="308"/>
    </location>
    <ligand>
        <name>pyridoxal 5'-phosphate</name>
        <dbReference type="ChEBI" id="CHEBI:597326"/>
    </ligand>
</feature>
<feature type="binding site" evidence="1">
    <location>
        <position position="311"/>
    </location>
    <ligand>
        <name>ATP</name>
        <dbReference type="ChEBI" id="CHEBI:30616"/>
    </ligand>
</feature>
<feature type="modified residue" description="Lysino-D-alanine (Lys); alternate" evidence="2 3">
    <location>
        <position position="57"/>
    </location>
</feature>
<feature type="modified residue" description="N6-(pyridoxal phosphate)lysine; alternate" evidence="2 3 4 7 8">
    <location>
        <position position="57"/>
    </location>
</feature>
<feature type="mutagenesis site" description="Loss of racemase activity. Reduces D-serine dehydratase activity by 99%. Slightly reduced L-serine dehydratase activity." evidence="3">
    <original>S</original>
    <variation>A</variation>
    <location>
        <position position="82"/>
    </location>
</feature>
<feature type="helix" evidence="11">
    <location>
        <begin position="10"/>
        <end position="20"/>
    </location>
</feature>
<feature type="turn" evidence="11">
    <location>
        <begin position="21"/>
        <end position="23"/>
    </location>
</feature>
<feature type="helix" evidence="11">
    <location>
        <begin position="33"/>
        <end position="39"/>
    </location>
</feature>
<feature type="strand" evidence="11">
    <location>
        <begin position="41"/>
        <end position="47"/>
    </location>
</feature>
<feature type="helix" evidence="11">
    <location>
        <begin position="48"/>
        <end position="50"/>
    </location>
</feature>
<feature type="helix" evidence="11">
    <location>
        <begin position="52"/>
        <end position="54"/>
    </location>
</feature>
<feature type="helix" evidence="11">
    <location>
        <begin position="57"/>
        <end position="65"/>
    </location>
</feature>
<feature type="helix" evidence="11">
    <location>
        <begin position="70"/>
        <end position="75"/>
    </location>
</feature>
<feature type="strand" evidence="11">
    <location>
        <begin position="77"/>
        <end position="79"/>
    </location>
</feature>
<feature type="helix" evidence="11">
    <location>
        <begin position="84"/>
        <end position="95"/>
    </location>
</feature>
<feature type="strand" evidence="11">
    <location>
        <begin position="100"/>
        <end position="105"/>
    </location>
</feature>
<feature type="helix" evidence="11">
    <location>
        <begin position="110"/>
        <end position="118"/>
    </location>
</feature>
<feature type="strand" evidence="11">
    <location>
        <begin position="122"/>
        <end position="126"/>
    </location>
</feature>
<feature type="turn" evidence="11">
    <location>
        <begin position="128"/>
        <end position="131"/>
    </location>
</feature>
<feature type="helix" evidence="11">
    <location>
        <begin position="133"/>
        <end position="144"/>
    </location>
</feature>
<feature type="strand" evidence="11">
    <location>
        <begin position="151"/>
        <end position="154"/>
    </location>
</feature>
<feature type="helix" evidence="11">
    <location>
        <begin position="155"/>
        <end position="161"/>
    </location>
</feature>
<feature type="helix" evidence="11">
    <location>
        <begin position="163"/>
        <end position="172"/>
    </location>
</feature>
<feature type="strand" evidence="11">
    <location>
        <begin position="176"/>
        <end position="181"/>
    </location>
</feature>
<feature type="strand" evidence="11">
    <location>
        <begin position="183"/>
        <end position="185"/>
    </location>
</feature>
<feature type="helix" evidence="11">
    <location>
        <begin position="186"/>
        <end position="198"/>
    </location>
</feature>
<feature type="strand" evidence="11">
    <location>
        <begin position="203"/>
        <end position="209"/>
    </location>
</feature>
<feature type="helix" evidence="11">
    <location>
        <begin position="210"/>
        <end position="212"/>
    </location>
</feature>
<feature type="helix" evidence="11">
    <location>
        <begin position="214"/>
        <end position="221"/>
    </location>
</feature>
<feature type="helix" evidence="12">
    <location>
        <begin position="235"/>
        <end position="237"/>
    </location>
</feature>
<feature type="helix" evidence="11">
    <location>
        <begin position="244"/>
        <end position="253"/>
    </location>
</feature>
<feature type="strand" evidence="11">
    <location>
        <begin position="256"/>
        <end position="260"/>
    </location>
</feature>
<feature type="helix" evidence="11">
    <location>
        <begin position="262"/>
        <end position="275"/>
    </location>
</feature>
<feature type="helix" evidence="11">
    <location>
        <begin position="282"/>
        <end position="285"/>
    </location>
</feature>
<feature type="helix" evidence="11">
    <location>
        <begin position="286"/>
        <end position="293"/>
    </location>
</feature>
<feature type="helix" evidence="11">
    <location>
        <begin position="294"/>
        <end position="298"/>
    </location>
</feature>
<feature type="strand" evidence="11">
    <location>
        <begin position="302"/>
        <end position="307"/>
    </location>
</feature>
<feature type="helix" evidence="11">
    <location>
        <begin position="314"/>
        <end position="321"/>
    </location>
</feature>
<keyword id="KW-0002">3D-structure</keyword>
<keyword id="KW-0021">Allosteric enzyme</keyword>
<keyword id="KW-0067">ATP-binding</keyword>
<keyword id="KW-0106">Calcium</keyword>
<keyword id="KW-0413">Isomerase</keyword>
<keyword id="KW-0456">Lyase</keyword>
<keyword id="KW-0460">Magnesium</keyword>
<keyword id="KW-0464">Manganese</keyword>
<keyword id="KW-0479">Metal-binding</keyword>
<keyword id="KW-0547">Nucleotide-binding</keyword>
<keyword id="KW-0663">Pyridoxal phosphate</keyword>
<keyword id="KW-1185">Reference proteome</keyword>
<protein>
    <recommendedName>
        <fullName>Serine racemase</fullName>
        <ecNumber evidence="3">5.1.1.18</ecNumber>
    </recommendedName>
    <alternativeName>
        <fullName>D-serine ammonia-lyase</fullName>
    </alternativeName>
    <alternativeName>
        <fullName>D-serine dehydratase</fullName>
        <ecNumber evidence="3">4.3.1.18</ecNumber>
    </alternativeName>
    <alternativeName>
        <fullName>L-serine ammonia-lyase</fullName>
    </alternativeName>
    <alternativeName>
        <fullName>L-serine dehydratase</fullName>
        <ecNumber evidence="3">4.3.1.17</ecNumber>
    </alternativeName>
</protein>
<reference key="1">
    <citation type="journal article" date="2002" name="Nature">
        <title>The genome sequence of Schizosaccharomyces pombe.</title>
        <authorList>
            <person name="Wood V."/>
            <person name="Gwilliam R."/>
            <person name="Rajandream M.A."/>
            <person name="Lyne M.H."/>
            <person name="Lyne R."/>
            <person name="Stewart A."/>
            <person name="Sgouros J.G."/>
            <person name="Peat N."/>
            <person name="Hayles J."/>
            <person name="Baker S.G."/>
            <person name="Basham D."/>
            <person name="Bowman S."/>
            <person name="Brooks K."/>
            <person name="Brown D."/>
            <person name="Brown S."/>
            <person name="Chillingworth T."/>
            <person name="Churcher C.M."/>
            <person name="Collins M."/>
            <person name="Connor R."/>
            <person name="Cronin A."/>
            <person name="Davis P."/>
            <person name="Feltwell T."/>
            <person name="Fraser A."/>
            <person name="Gentles S."/>
            <person name="Goble A."/>
            <person name="Hamlin N."/>
            <person name="Harris D.E."/>
            <person name="Hidalgo J."/>
            <person name="Hodgson G."/>
            <person name="Holroyd S."/>
            <person name="Hornsby T."/>
            <person name="Howarth S."/>
            <person name="Huckle E.J."/>
            <person name="Hunt S."/>
            <person name="Jagels K."/>
            <person name="James K.D."/>
            <person name="Jones L."/>
            <person name="Jones M."/>
            <person name="Leather S."/>
            <person name="McDonald S."/>
            <person name="McLean J."/>
            <person name="Mooney P."/>
            <person name="Moule S."/>
            <person name="Mungall K.L."/>
            <person name="Murphy L.D."/>
            <person name="Niblett D."/>
            <person name="Odell C."/>
            <person name="Oliver K."/>
            <person name="O'Neil S."/>
            <person name="Pearson D."/>
            <person name="Quail M.A."/>
            <person name="Rabbinowitsch E."/>
            <person name="Rutherford K.M."/>
            <person name="Rutter S."/>
            <person name="Saunders D."/>
            <person name="Seeger K."/>
            <person name="Sharp S."/>
            <person name="Skelton J."/>
            <person name="Simmonds M.N."/>
            <person name="Squares R."/>
            <person name="Squares S."/>
            <person name="Stevens K."/>
            <person name="Taylor K."/>
            <person name="Taylor R.G."/>
            <person name="Tivey A."/>
            <person name="Walsh S.V."/>
            <person name="Warren T."/>
            <person name="Whitehead S."/>
            <person name="Woodward J.R."/>
            <person name="Volckaert G."/>
            <person name="Aert R."/>
            <person name="Robben J."/>
            <person name="Grymonprez B."/>
            <person name="Weltjens I."/>
            <person name="Vanstreels E."/>
            <person name="Rieger M."/>
            <person name="Schaefer M."/>
            <person name="Mueller-Auer S."/>
            <person name="Gabel C."/>
            <person name="Fuchs M."/>
            <person name="Duesterhoeft A."/>
            <person name="Fritzc C."/>
            <person name="Holzer E."/>
            <person name="Moestl D."/>
            <person name="Hilbert H."/>
            <person name="Borzym K."/>
            <person name="Langer I."/>
            <person name="Beck A."/>
            <person name="Lehrach H."/>
            <person name="Reinhardt R."/>
            <person name="Pohl T.M."/>
            <person name="Eger P."/>
            <person name="Zimmermann W."/>
            <person name="Wedler H."/>
            <person name="Wambutt R."/>
            <person name="Purnelle B."/>
            <person name="Goffeau A."/>
            <person name="Cadieu E."/>
            <person name="Dreano S."/>
            <person name="Gloux S."/>
            <person name="Lelaure V."/>
            <person name="Mottier S."/>
            <person name="Galibert F."/>
            <person name="Aves S.J."/>
            <person name="Xiang Z."/>
            <person name="Hunt C."/>
            <person name="Moore K."/>
            <person name="Hurst S.M."/>
            <person name="Lucas M."/>
            <person name="Rochet M."/>
            <person name="Gaillardin C."/>
            <person name="Tallada V.A."/>
            <person name="Garzon A."/>
            <person name="Thode G."/>
            <person name="Daga R.R."/>
            <person name="Cruzado L."/>
            <person name="Jimenez J."/>
            <person name="Sanchez M."/>
            <person name="del Rey F."/>
            <person name="Benito J."/>
            <person name="Dominguez A."/>
            <person name="Revuelta J.L."/>
            <person name="Moreno S."/>
            <person name="Armstrong J."/>
            <person name="Forsburg S.L."/>
            <person name="Cerutti L."/>
            <person name="Lowe T."/>
            <person name="McCombie W.R."/>
            <person name="Paulsen I."/>
            <person name="Potashkin J."/>
            <person name="Shpakovski G.V."/>
            <person name="Ussery D."/>
            <person name="Barrell B.G."/>
            <person name="Nurse P."/>
        </authorList>
    </citation>
    <scope>NUCLEOTIDE SEQUENCE [LARGE SCALE GENOMIC DNA]</scope>
    <source>
        <strain>972 / ATCC 24843</strain>
    </source>
</reference>
<reference evidence="7" key="2">
    <citation type="submission" date="2003-12" db="PDB data bank">
        <title>Crystal Structure of S.pombe Serine Racemase.</title>
        <authorList>
            <person name="Goto M."/>
        </authorList>
    </citation>
    <scope>X-RAY CRYSTALLOGRAPHY (1.70 ANGSTROMS) IN COMPLEX WITH MG(2+) AND PYRIDOXAL 5'-PHOSPHATE</scope>
    <scope>COFACTOR</scope>
    <scope>PYRIDOXAL PHOSPHATE AT LYS-57</scope>
</reference>
<reference evidence="9" key="3">
    <citation type="journal article" date="2009" name="J. Biochem.">
        <title>Serine racemase with catalytically active lysinoalanyl residue.</title>
        <authorList>
            <person name="Yamauchi T."/>
            <person name="Goto M."/>
            <person name="Wu H.Y."/>
            <person name="Uo T."/>
            <person name="Yoshimura T."/>
            <person name="Mihara H."/>
            <person name="Kurihara T."/>
            <person name="Miyahara I."/>
            <person name="Hirotsu K."/>
            <person name="Esaki N."/>
        </authorList>
    </citation>
    <scope>X-RAY CRYSTALLOGRAPHY (1.7 ANGSTROMS) IN COMPLEX WITH PYRIDOXAL PHOSPHATE AND MAGNESIUM IONS</scope>
    <scope>COFACTOR</scope>
    <scope>ACTIVITY REGULATION</scope>
    <scope>ACTIVE SITE</scope>
    <scope>PYRIDOXAL PHOSPHATE AT LYS-57</scope>
    <scope>SUBUNIT</scope>
    <scope>IDENTIFICATION BY MASS SPECTROMETRY</scope>
    <scope>LYSINO-D-ALANINE AT LYS-57</scope>
</reference>
<reference evidence="8 10" key="4">
    <citation type="journal article" date="2009" name="J. Biol. Chem.">
        <title>Crystal structure of a homolog of mammalian serine racemase from Schizosaccharomyces pombe.</title>
        <authorList>
            <person name="Goto M."/>
            <person name="Yamauchi T."/>
            <person name="Kamiya N."/>
            <person name="Miyahara I."/>
            <person name="Yoshimura T."/>
            <person name="Mihara H."/>
            <person name="Kurihara T."/>
            <person name="Hirotsu K."/>
            <person name="Esaki N."/>
        </authorList>
    </citation>
    <scope>X-RAY CRYSTALLOGRAPHY (1.7 ANGSTROMS) IN COMPLEX WITH PYRIDOXAL PHOSPHATE; SERINE; ATP ANALOG AND MAGNESIUM IONS</scope>
    <scope>CATALYTIC ACTIVITY</scope>
    <scope>FUNCTION</scope>
    <scope>COFACTOR</scope>
    <scope>ACTIVE SITE</scope>
    <scope>PYRIDOXAL PHOSPHATE AT LYS-57</scope>
    <scope>LYSINO-D-ALANINE AT LYS-57</scope>
    <scope>BIOPHYSICOCHEMICAL PROPERTIES</scope>
    <scope>SUBUNIT</scope>
    <scope>ACTIVITY REGULATION</scope>
    <scope>MUTAGENESIS OF SER-82</scope>
</reference>
<name>SRR_SCHPO</name>
<dbReference type="EC" id="5.1.1.18" evidence="3"/>
<dbReference type="EC" id="4.3.1.18" evidence="3"/>
<dbReference type="EC" id="4.3.1.17" evidence="3"/>
<dbReference type="EMBL" id="CU329672">
    <property type="protein sequence ID" value="CAA20920.1"/>
    <property type="molecule type" value="Genomic_DNA"/>
</dbReference>
<dbReference type="PIR" id="T41297">
    <property type="entry name" value="T41297"/>
</dbReference>
<dbReference type="RefSeq" id="NP_587715.1">
    <property type="nucleotide sequence ID" value="NM_001022710.2"/>
</dbReference>
<dbReference type="PDB" id="1V71">
    <property type="method" value="X-ray"/>
    <property type="resolution" value="1.70 A"/>
    <property type="chains" value="A=1-323"/>
</dbReference>
<dbReference type="PDB" id="1WTC">
    <property type="method" value="X-ray"/>
    <property type="resolution" value="1.90 A"/>
    <property type="chains" value="A=1-323"/>
</dbReference>
<dbReference type="PDB" id="2ZPU">
    <property type="method" value="X-ray"/>
    <property type="resolution" value="1.70 A"/>
    <property type="chains" value="A=1-323"/>
</dbReference>
<dbReference type="PDB" id="2ZR8">
    <property type="method" value="X-ray"/>
    <property type="resolution" value="2.20 A"/>
    <property type="chains" value="A=1-323"/>
</dbReference>
<dbReference type="PDBsum" id="1V71"/>
<dbReference type="PDBsum" id="1WTC"/>
<dbReference type="PDBsum" id="2ZPU"/>
<dbReference type="PDBsum" id="2ZR8"/>
<dbReference type="SMR" id="O59791"/>
<dbReference type="BioGRID" id="275321">
    <property type="interactions" value="6"/>
</dbReference>
<dbReference type="FunCoup" id="O59791">
    <property type="interactions" value="138"/>
</dbReference>
<dbReference type="STRING" id="284812.O59791"/>
<dbReference type="BindingDB" id="O59791"/>
<dbReference type="ChEMBL" id="CHEMBL3097984"/>
<dbReference type="iPTMnet" id="O59791"/>
<dbReference type="PaxDb" id="4896-SPCC320.14.1"/>
<dbReference type="EnsemblFungi" id="SPCC320.14.1">
    <property type="protein sequence ID" value="SPCC320.14.1:pep"/>
    <property type="gene ID" value="SPCC320.14"/>
</dbReference>
<dbReference type="GeneID" id="2538738"/>
<dbReference type="KEGG" id="spo:2538738"/>
<dbReference type="PomBase" id="SPCC320.14">
    <property type="gene designation" value="sry1"/>
</dbReference>
<dbReference type="VEuPathDB" id="FungiDB:SPCC320.14"/>
<dbReference type="eggNOG" id="KOG1251">
    <property type="taxonomic scope" value="Eukaryota"/>
</dbReference>
<dbReference type="HOGENOM" id="CLU_021152_4_2_1"/>
<dbReference type="InParanoid" id="O59791"/>
<dbReference type="OMA" id="LIHPFDH"/>
<dbReference type="PhylomeDB" id="O59791"/>
<dbReference type="BRENDA" id="5.1.1.18">
    <property type="organism ID" value="5613"/>
</dbReference>
<dbReference type="Reactome" id="R-SPO-977347">
    <property type="pathway name" value="Serine biosynthesis"/>
</dbReference>
<dbReference type="SABIO-RK" id="O59791"/>
<dbReference type="EvolutionaryTrace" id="O59791"/>
<dbReference type="PRO" id="PR:O59791"/>
<dbReference type="Proteomes" id="UP000002485">
    <property type="component" value="Chromosome III"/>
</dbReference>
<dbReference type="GO" id="GO:0005524">
    <property type="term" value="F:ATP binding"/>
    <property type="evidence" value="ECO:0000314"/>
    <property type="project" value="UniProtKB"/>
</dbReference>
<dbReference type="GO" id="GO:0008721">
    <property type="term" value="F:D-serine ammonia-lyase activity"/>
    <property type="evidence" value="ECO:0000314"/>
    <property type="project" value="UniProtKB"/>
</dbReference>
<dbReference type="GO" id="GO:0003941">
    <property type="term" value="F:L-serine ammonia-lyase activity"/>
    <property type="evidence" value="ECO:0000314"/>
    <property type="project" value="UniProtKB"/>
</dbReference>
<dbReference type="GO" id="GO:0000287">
    <property type="term" value="F:magnesium ion binding"/>
    <property type="evidence" value="ECO:0000314"/>
    <property type="project" value="UniProtKB"/>
</dbReference>
<dbReference type="GO" id="GO:0042803">
    <property type="term" value="F:protein homodimerization activity"/>
    <property type="evidence" value="ECO:0000353"/>
    <property type="project" value="UniProtKB"/>
</dbReference>
<dbReference type="GO" id="GO:0030170">
    <property type="term" value="F:pyridoxal phosphate binding"/>
    <property type="evidence" value="ECO:0000314"/>
    <property type="project" value="UniProtKB"/>
</dbReference>
<dbReference type="GO" id="GO:0030378">
    <property type="term" value="F:serine racemase activity"/>
    <property type="evidence" value="ECO:0000314"/>
    <property type="project" value="UniProtKB"/>
</dbReference>
<dbReference type="GO" id="GO:0018114">
    <property type="term" value="F:threonine racemase activity"/>
    <property type="evidence" value="ECO:0000318"/>
    <property type="project" value="GO_Central"/>
</dbReference>
<dbReference type="GO" id="GO:0070178">
    <property type="term" value="P:D-serine metabolic process"/>
    <property type="evidence" value="ECO:0000314"/>
    <property type="project" value="UniProtKB"/>
</dbReference>
<dbReference type="GO" id="GO:0006563">
    <property type="term" value="P:L-serine metabolic process"/>
    <property type="evidence" value="ECO:0000314"/>
    <property type="project" value="UniProtKB"/>
</dbReference>
<dbReference type="CDD" id="cd01562">
    <property type="entry name" value="Thr-dehyd"/>
    <property type="match status" value="1"/>
</dbReference>
<dbReference type="FunFam" id="3.40.50.1100:FF:000007">
    <property type="entry name" value="L-threonine dehydratase catabolic TdcB"/>
    <property type="match status" value="1"/>
</dbReference>
<dbReference type="FunFam" id="3.40.50.1100:FF:000005">
    <property type="entry name" value="Threonine dehydratase catabolic"/>
    <property type="match status" value="1"/>
</dbReference>
<dbReference type="Gene3D" id="3.40.50.1100">
    <property type="match status" value="2"/>
</dbReference>
<dbReference type="InterPro" id="IPR001926">
    <property type="entry name" value="TrpB-like_PALP"/>
</dbReference>
<dbReference type="InterPro" id="IPR036052">
    <property type="entry name" value="TrpB-like_PALP_sf"/>
</dbReference>
<dbReference type="NCBIfam" id="NF005454">
    <property type="entry name" value="PRK07048.1"/>
    <property type="match status" value="1"/>
</dbReference>
<dbReference type="PANTHER" id="PTHR43050">
    <property type="entry name" value="SERINE / THREONINE RACEMASE FAMILY MEMBER"/>
    <property type="match status" value="1"/>
</dbReference>
<dbReference type="PANTHER" id="PTHR43050:SF1">
    <property type="entry name" value="SERINE RACEMASE"/>
    <property type="match status" value="1"/>
</dbReference>
<dbReference type="Pfam" id="PF00291">
    <property type="entry name" value="PALP"/>
    <property type="match status" value="1"/>
</dbReference>
<dbReference type="SUPFAM" id="SSF53686">
    <property type="entry name" value="Tryptophan synthase beta subunit-like PLP-dependent enzymes"/>
    <property type="match status" value="1"/>
</dbReference>
<sequence length="323" mass="35048">MSDNLVLPTYDDVASASERIKKFANKTPVLTSSTVNKEFVAEVFFKCENFQKMGAFKFRGALNALSQLNEAQRKAGVLTFSSGNHAQAIALSAKILGIPAKIIMPLDAPEAKVAATKGYGGQVIMYDRYKDDREKMAKEISEREGLTIIPPYDHPHVLAGQGTAAKELFEEVGPLDALFVCLGGGGLLSGSALAARHFAPNCEVYGVEPEAGNDGQQSFRKGSIVHIDTPKTIADGAQTQHLGNYTFSIIKEKVDDILTVSDEELIDCLKFYAARMKIVVEPTGCLSFAAARAMKEKLKNKRIGIIISGGNVDIERYAHFLSQ</sequence>
<proteinExistence type="evidence at protein level"/>